<keyword id="KW-0173">Coenzyme A biosynthesis</keyword>
<keyword id="KW-0342">GTP-binding</keyword>
<keyword id="KW-0418">Kinase</keyword>
<keyword id="KW-0547">Nucleotide-binding</keyword>
<keyword id="KW-1185">Reference proteome</keyword>
<keyword id="KW-0808">Transferase</keyword>
<dbReference type="EC" id="2.7.1.237" evidence="1"/>
<dbReference type="EMBL" id="L77117">
    <property type="protein sequence ID" value="AAB98385.1"/>
    <property type="molecule type" value="Genomic_DNA"/>
</dbReference>
<dbReference type="PIR" id="C64349">
    <property type="entry name" value="C64349"/>
</dbReference>
<dbReference type="RefSeq" id="WP_010869894.1">
    <property type="nucleotide sequence ID" value="NC_000909.1"/>
</dbReference>
<dbReference type="SMR" id="Q57838"/>
<dbReference type="FunCoup" id="Q57838">
    <property type="interactions" value="5"/>
</dbReference>
<dbReference type="STRING" id="243232.MJ_0395"/>
<dbReference type="PaxDb" id="243232-MJ_0395"/>
<dbReference type="EnsemblBacteria" id="AAB98385">
    <property type="protein sequence ID" value="AAB98385"/>
    <property type="gene ID" value="MJ_0395"/>
</dbReference>
<dbReference type="GeneID" id="1451252"/>
<dbReference type="KEGG" id="mja:MJ_0395"/>
<dbReference type="eggNOG" id="arCOG04076">
    <property type="taxonomic scope" value="Archaea"/>
</dbReference>
<dbReference type="HOGENOM" id="CLU_120795_1_0_2"/>
<dbReference type="InParanoid" id="Q57838"/>
<dbReference type="OrthoDB" id="15447at2157"/>
<dbReference type="PhylomeDB" id="Q57838"/>
<dbReference type="UniPathway" id="UPA00241"/>
<dbReference type="Proteomes" id="UP000000805">
    <property type="component" value="Chromosome"/>
</dbReference>
<dbReference type="GO" id="GO:0005525">
    <property type="term" value="F:GTP binding"/>
    <property type="evidence" value="ECO:0007669"/>
    <property type="project" value="UniProtKB-UniRule"/>
</dbReference>
<dbReference type="GO" id="GO:0016301">
    <property type="term" value="F:kinase activity"/>
    <property type="evidence" value="ECO:0007669"/>
    <property type="project" value="UniProtKB-UniRule"/>
</dbReference>
<dbReference type="GO" id="GO:0015937">
    <property type="term" value="P:coenzyme A biosynthetic process"/>
    <property type="evidence" value="ECO:0007669"/>
    <property type="project" value="UniProtKB-UniRule"/>
</dbReference>
<dbReference type="HAMAP" id="MF_00590">
    <property type="entry name" value="Dephospho_CoA_kinase_GTP_dep"/>
    <property type="match status" value="1"/>
</dbReference>
<dbReference type="InterPro" id="IPR007164">
    <property type="entry name" value="GTP-dep_dephospho-CoA_kin"/>
</dbReference>
<dbReference type="PANTHER" id="PTHR40732:SF1">
    <property type="entry name" value="GTP-DEPENDENT DEPHOSPHO-COA KINASE"/>
    <property type="match status" value="1"/>
</dbReference>
<dbReference type="PANTHER" id="PTHR40732">
    <property type="entry name" value="UPF0218 PROTEIN TK1697"/>
    <property type="match status" value="1"/>
</dbReference>
<dbReference type="Pfam" id="PF04019">
    <property type="entry name" value="DUF359"/>
    <property type="match status" value="1"/>
</dbReference>
<dbReference type="PIRSF" id="PIRSF006533">
    <property type="entry name" value="UCP006533"/>
    <property type="match status" value="1"/>
</dbReference>
<accession>Q57838</accession>
<sequence>MLVLPEELREKLKKPFGKVYKTLPDIDGDIVTVGDIVTKTAIENNIIPKLSIFDLKTRRNIPVKINHVFKKVIKVKNPPGCISDEAIESIKYLSTINDRNIALLVDGEEDLLALIVIKYFPIGTYVLYGQPDEGIVVLKINKKLKQEIEEILKQFKKI</sequence>
<reference key="1">
    <citation type="journal article" date="1996" name="Science">
        <title>Complete genome sequence of the methanogenic archaeon, Methanococcus jannaschii.</title>
        <authorList>
            <person name="Bult C.J."/>
            <person name="White O."/>
            <person name="Olsen G.J."/>
            <person name="Zhou L."/>
            <person name="Fleischmann R.D."/>
            <person name="Sutton G.G."/>
            <person name="Blake J.A."/>
            <person name="FitzGerald L.M."/>
            <person name="Clayton R.A."/>
            <person name="Gocayne J.D."/>
            <person name="Kerlavage A.R."/>
            <person name="Dougherty B.A."/>
            <person name="Tomb J.-F."/>
            <person name="Adams M.D."/>
            <person name="Reich C.I."/>
            <person name="Overbeek R."/>
            <person name="Kirkness E.F."/>
            <person name="Weinstock K.G."/>
            <person name="Merrick J.M."/>
            <person name="Glodek A."/>
            <person name="Scott J.L."/>
            <person name="Geoghagen N.S.M."/>
            <person name="Weidman J.F."/>
            <person name="Fuhrmann J.L."/>
            <person name="Nguyen D."/>
            <person name="Utterback T.R."/>
            <person name="Kelley J.M."/>
            <person name="Peterson J.D."/>
            <person name="Sadow P.W."/>
            <person name="Hanna M.C."/>
            <person name="Cotton M.D."/>
            <person name="Roberts K.M."/>
            <person name="Hurst M.A."/>
            <person name="Kaine B.P."/>
            <person name="Borodovsky M."/>
            <person name="Klenk H.-P."/>
            <person name="Fraser C.M."/>
            <person name="Smith H.O."/>
            <person name="Woese C.R."/>
            <person name="Venter J.C."/>
        </authorList>
    </citation>
    <scope>NUCLEOTIDE SEQUENCE [LARGE SCALE GENOMIC DNA]</scope>
    <source>
        <strain>ATCC 43067 / DSM 2661 / JAL-1 / JCM 10045 / NBRC 100440</strain>
    </source>
</reference>
<organism>
    <name type="scientific">Methanocaldococcus jannaschii (strain ATCC 43067 / DSM 2661 / JAL-1 / JCM 10045 / NBRC 100440)</name>
    <name type="common">Methanococcus jannaschii</name>
    <dbReference type="NCBI Taxonomy" id="243232"/>
    <lineage>
        <taxon>Archaea</taxon>
        <taxon>Methanobacteriati</taxon>
        <taxon>Methanobacteriota</taxon>
        <taxon>Methanomada group</taxon>
        <taxon>Methanococci</taxon>
        <taxon>Methanococcales</taxon>
        <taxon>Methanocaldococcaceae</taxon>
        <taxon>Methanocaldococcus</taxon>
    </lineage>
</organism>
<comment type="function">
    <text evidence="1">Catalyzes the GTP-dependent phosphorylation of the 3'-hydroxyl group of dephosphocoenzyme A to form coenzyme A (CoA).</text>
</comment>
<comment type="catalytic activity">
    <reaction evidence="1">
        <text>3'-dephospho-CoA + GTP = GDP + CoA + H(+)</text>
        <dbReference type="Rhea" id="RHEA:61156"/>
        <dbReference type="ChEBI" id="CHEBI:15378"/>
        <dbReference type="ChEBI" id="CHEBI:37565"/>
        <dbReference type="ChEBI" id="CHEBI:57287"/>
        <dbReference type="ChEBI" id="CHEBI:57328"/>
        <dbReference type="ChEBI" id="CHEBI:58189"/>
        <dbReference type="EC" id="2.7.1.237"/>
    </reaction>
</comment>
<comment type="pathway">
    <text evidence="1">Cofactor biosynthesis; coenzyme A biosynthesis.</text>
</comment>
<comment type="similarity">
    <text evidence="1">Belongs to the GTP-dependent DPCK family.</text>
</comment>
<gene>
    <name type="ordered locus">MJ0395</name>
</gene>
<name>DPCKG_METJA</name>
<protein>
    <recommendedName>
        <fullName evidence="1">GTP-dependent dephospho-CoA kinase</fullName>
        <ecNumber evidence="1">2.7.1.237</ecNumber>
    </recommendedName>
    <alternativeName>
        <fullName evidence="1">Dephospho-coenzyme A kinase</fullName>
        <shortName evidence="1">DPCK</shortName>
    </alternativeName>
</protein>
<evidence type="ECO:0000255" key="1">
    <source>
        <dbReference type="HAMAP-Rule" id="MF_00590"/>
    </source>
</evidence>
<proteinExistence type="inferred from homology"/>
<feature type="chain" id="PRO_0000137608" description="GTP-dependent dephospho-CoA kinase">
    <location>
        <begin position="1"/>
        <end position="158"/>
    </location>
</feature>
<feature type="binding site" evidence="1">
    <location>
        <position position="35"/>
    </location>
    <ligand>
        <name>GTP</name>
        <dbReference type="ChEBI" id="CHEBI:37565"/>
    </ligand>
</feature>
<feature type="binding site" evidence="1">
    <location>
        <position position="36"/>
    </location>
    <ligand>
        <name>GTP</name>
        <dbReference type="ChEBI" id="CHEBI:37565"/>
    </ligand>
</feature>
<feature type="binding site" evidence="1">
    <location>
        <position position="37"/>
    </location>
    <ligand>
        <name>GTP</name>
        <dbReference type="ChEBI" id="CHEBI:37565"/>
    </ligand>
</feature>
<feature type="binding site" evidence="1">
    <location>
        <position position="54"/>
    </location>
    <ligand>
        <name>GTP</name>
        <dbReference type="ChEBI" id="CHEBI:37565"/>
    </ligand>
</feature>
<feature type="binding site" evidence="1">
    <location>
        <position position="56"/>
    </location>
    <ligand>
        <name>GTP</name>
        <dbReference type="ChEBI" id="CHEBI:37565"/>
    </ligand>
</feature>
<feature type="binding site" evidence="1">
    <location>
        <position position="109"/>
    </location>
    <ligand>
        <name>GTP</name>
        <dbReference type="ChEBI" id="CHEBI:37565"/>
    </ligand>
</feature>
<feature type="binding site" evidence="1">
    <location>
        <position position="132"/>
    </location>
    <ligand>
        <name>GTP</name>
        <dbReference type="ChEBI" id="CHEBI:37565"/>
    </ligand>
</feature>